<evidence type="ECO:0000255" key="1">
    <source>
        <dbReference type="HAMAP-Rule" id="MF_00184"/>
    </source>
</evidence>
<evidence type="ECO:0000255" key="2">
    <source>
        <dbReference type="PROSITE-ProRule" id="PRU01228"/>
    </source>
</evidence>
<evidence type="ECO:0000256" key="3">
    <source>
        <dbReference type="SAM" id="MobiDB-lite"/>
    </source>
</evidence>
<dbReference type="EC" id="6.1.1.3" evidence="1"/>
<dbReference type="EMBL" id="AP008957">
    <property type="protein sequence ID" value="BAH33611.1"/>
    <property type="molecule type" value="Genomic_DNA"/>
</dbReference>
<dbReference type="RefSeq" id="WP_007732914.1">
    <property type="nucleotide sequence ID" value="NC_012490.1"/>
</dbReference>
<dbReference type="SMR" id="C0ZZ26"/>
<dbReference type="GeneID" id="64140706"/>
<dbReference type="KEGG" id="rer:RER_29030"/>
<dbReference type="eggNOG" id="COG0441">
    <property type="taxonomic scope" value="Bacteria"/>
</dbReference>
<dbReference type="HOGENOM" id="CLU_008554_0_1_11"/>
<dbReference type="Proteomes" id="UP000002204">
    <property type="component" value="Chromosome"/>
</dbReference>
<dbReference type="GO" id="GO:0005737">
    <property type="term" value="C:cytoplasm"/>
    <property type="evidence" value="ECO:0007669"/>
    <property type="project" value="UniProtKB-SubCell"/>
</dbReference>
<dbReference type="GO" id="GO:0005524">
    <property type="term" value="F:ATP binding"/>
    <property type="evidence" value="ECO:0007669"/>
    <property type="project" value="UniProtKB-UniRule"/>
</dbReference>
<dbReference type="GO" id="GO:0046872">
    <property type="term" value="F:metal ion binding"/>
    <property type="evidence" value="ECO:0007669"/>
    <property type="project" value="UniProtKB-KW"/>
</dbReference>
<dbReference type="GO" id="GO:0004829">
    <property type="term" value="F:threonine-tRNA ligase activity"/>
    <property type="evidence" value="ECO:0007669"/>
    <property type="project" value="UniProtKB-UniRule"/>
</dbReference>
<dbReference type="GO" id="GO:0000049">
    <property type="term" value="F:tRNA binding"/>
    <property type="evidence" value="ECO:0007669"/>
    <property type="project" value="UniProtKB-KW"/>
</dbReference>
<dbReference type="GO" id="GO:0006435">
    <property type="term" value="P:threonyl-tRNA aminoacylation"/>
    <property type="evidence" value="ECO:0007669"/>
    <property type="project" value="UniProtKB-UniRule"/>
</dbReference>
<dbReference type="CDD" id="cd00860">
    <property type="entry name" value="ThrRS_anticodon"/>
    <property type="match status" value="1"/>
</dbReference>
<dbReference type="CDD" id="cd00771">
    <property type="entry name" value="ThrRS_core"/>
    <property type="match status" value="1"/>
</dbReference>
<dbReference type="FunFam" id="3.30.54.20:FF:000003">
    <property type="entry name" value="Threonine--tRNA ligase"/>
    <property type="match status" value="1"/>
</dbReference>
<dbReference type="FunFam" id="3.30.930.10:FF:000019">
    <property type="entry name" value="Threonine--tRNA ligase"/>
    <property type="match status" value="1"/>
</dbReference>
<dbReference type="FunFam" id="3.40.50.800:FF:000001">
    <property type="entry name" value="Threonine--tRNA ligase"/>
    <property type="match status" value="1"/>
</dbReference>
<dbReference type="FunFam" id="3.30.980.10:FF:000005">
    <property type="entry name" value="Threonyl-tRNA synthetase, mitochondrial"/>
    <property type="match status" value="1"/>
</dbReference>
<dbReference type="Gene3D" id="3.30.54.20">
    <property type="match status" value="1"/>
</dbReference>
<dbReference type="Gene3D" id="3.40.50.800">
    <property type="entry name" value="Anticodon-binding domain"/>
    <property type="match status" value="1"/>
</dbReference>
<dbReference type="Gene3D" id="3.30.930.10">
    <property type="entry name" value="Bira Bifunctional Protein, Domain 2"/>
    <property type="match status" value="1"/>
</dbReference>
<dbReference type="Gene3D" id="3.30.980.10">
    <property type="entry name" value="Threonyl-trna Synthetase, Chain A, domain 2"/>
    <property type="match status" value="1"/>
</dbReference>
<dbReference type="HAMAP" id="MF_00184">
    <property type="entry name" value="Thr_tRNA_synth"/>
    <property type="match status" value="1"/>
</dbReference>
<dbReference type="InterPro" id="IPR002314">
    <property type="entry name" value="aa-tRNA-synt_IIb"/>
</dbReference>
<dbReference type="InterPro" id="IPR006195">
    <property type="entry name" value="aa-tRNA-synth_II"/>
</dbReference>
<dbReference type="InterPro" id="IPR045864">
    <property type="entry name" value="aa-tRNA-synth_II/BPL/LPL"/>
</dbReference>
<dbReference type="InterPro" id="IPR004154">
    <property type="entry name" value="Anticodon-bd"/>
</dbReference>
<dbReference type="InterPro" id="IPR036621">
    <property type="entry name" value="Anticodon-bd_dom_sf"/>
</dbReference>
<dbReference type="InterPro" id="IPR004095">
    <property type="entry name" value="TGS"/>
</dbReference>
<dbReference type="InterPro" id="IPR002320">
    <property type="entry name" value="Thr-tRNA-ligase_IIa"/>
</dbReference>
<dbReference type="InterPro" id="IPR018163">
    <property type="entry name" value="Thr/Ala-tRNA-synth_IIc_edit"/>
</dbReference>
<dbReference type="InterPro" id="IPR047246">
    <property type="entry name" value="ThrRS_anticodon"/>
</dbReference>
<dbReference type="InterPro" id="IPR033728">
    <property type="entry name" value="ThrRS_core"/>
</dbReference>
<dbReference type="InterPro" id="IPR012947">
    <property type="entry name" value="tRNA_SAD"/>
</dbReference>
<dbReference type="NCBIfam" id="TIGR00418">
    <property type="entry name" value="thrS"/>
    <property type="match status" value="1"/>
</dbReference>
<dbReference type="PANTHER" id="PTHR11451:SF44">
    <property type="entry name" value="THREONINE--TRNA LIGASE, CHLOROPLASTIC_MITOCHONDRIAL 2"/>
    <property type="match status" value="1"/>
</dbReference>
<dbReference type="PANTHER" id="PTHR11451">
    <property type="entry name" value="THREONINE-TRNA LIGASE"/>
    <property type="match status" value="1"/>
</dbReference>
<dbReference type="Pfam" id="PF03129">
    <property type="entry name" value="HGTP_anticodon"/>
    <property type="match status" value="1"/>
</dbReference>
<dbReference type="Pfam" id="PF00587">
    <property type="entry name" value="tRNA-synt_2b"/>
    <property type="match status" value="1"/>
</dbReference>
<dbReference type="Pfam" id="PF07973">
    <property type="entry name" value="tRNA_SAD"/>
    <property type="match status" value="1"/>
</dbReference>
<dbReference type="PRINTS" id="PR01047">
    <property type="entry name" value="TRNASYNTHTHR"/>
</dbReference>
<dbReference type="SMART" id="SM00863">
    <property type="entry name" value="tRNA_SAD"/>
    <property type="match status" value="1"/>
</dbReference>
<dbReference type="SUPFAM" id="SSF52954">
    <property type="entry name" value="Class II aaRS ABD-related"/>
    <property type="match status" value="1"/>
</dbReference>
<dbReference type="SUPFAM" id="SSF55681">
    <property type="entry name" value="Class II aaRS and biotin synthetases"/>
    <property type="match status" value="1"/>
</dbReference>
<dbReference type="SUPFAM" id="SSF55186">
    <property type="entry name" value="ThrRS/AlaRS common domain"/>
    <property type="match status" value="1"/>
</dbReference>
<dbReference type="PROSITE" id="PS50862">
    <property type="entry name" value="AA_TRNA_LIGASE_II"/>
    <property type="match status" value="1"/>
</dbReference>
<dbReference type="PROSITE" id="PS51880">
    <property type="entry name" value="TGS"/>
    <property type="match status" value="1"/>
</dbReference>
<organism>
    <name type="scientific">Rhodococcus erythropolis (strain PR4 / NBRC 100887)</name>
    <dbReference type="NCBI Taxonomy" id="234621"/>
    <lineage>
        <taxon>Bacteria</taxon>
        <taxon>Bacillati</taxon>
        <taxon>Actinomycetota</taxon>
        <taxon>Actinomycetes</taxon>
        <taxon>Mycobacteriales</taxon>
        <taxon>Nocardiaceae</taxon>
        <taxon>Rhodococcus</taxon>
        <taxon>Rhodococcus erythropolis group</taxon>
    </lineage>
</organism>
<keyword id="KW-0030">Aminoacyl-tRNA synthetase</keyword>
<keyword id="KW-0067">ATP-binding</keyword>
<keyword id="KW-0963">Cytoplasm</keyword>
<keyword id="KW-0436">Ligase</keyword>
<keyword id="KW-0479">Metal-binding</keyword>
<keyword id="KW-0547">Nucleotide-binding</keyword>
<keyword id="KW-0648">Protein biosynthesis</keyword>
<keyword id="KW-0694">RNA-binding</keyword>
<keyword id="KW-0820">tRNA-binding</keyword>
<keyword id="KW-0862">Zinc</keyword>
<proteinExistence type="inferred from homology"/>
<accession>C0ZZ26</accession>
<sequence length="685" mass="76792">MTSPAPEHSAAPLRVPAGTTAGTAVREAGYPTKGPDVIVVVRDGEGTLKDLSWTPEVDVDVEPVAASTEDGRSVIRHSAAHVLAQAVQKEFPDAKLGIGPPIKDGFYYDFAVDRPFTPEDLAKLEKRMKQIIKGSQRFSRRVVDSIEDARVELADEPFKLELIDDKSGIDDPEIMEVGGNELTIYDNLDPRTGDKIWSDLCRGPHIPTTKHIPAFKLTRSSAAYWRGNQDNADLQRVYGTAWESTEAQDEYLELLAEAERRDHRKLGTELDLFSFPDELGSGLPVFHPKGGIIRTEMENYSRSRHIEAGYEFVNTPHITKGHLYEVSGHLDWYRDGMFPAMHVDEELNEDGTVRKPGQDYYLKPMNCPMHNLIFRARGRSYRELPLRLFEFGSVYRYEKSGVIHGLTRVRGMTQDDAHIYCTREQMRDELTTTLQFVLNLLKDYGLDDFYLELSTKNPDKFVGSDDVWEEATATLAEVGEASGLTLVPDPGGAAFYGPKISVQVKDALGRTWQMSTIQLDFNLPERFELEYTGNDGVKTRPVMIHRALFGSIERFFGVLTEHYAGAFPAWLAPVQVVGIPVAEAFADHLFDVTKKLKAAGVRAEVDFSDDRMQKKIRNHTTQKVPFMLLAGERDVEAGAVSFRFRDGTQINGIPVDDAVRIITEWIGRRENASPTAELVQPSVAQ</sequence>
<reference key="1">
    <citation type="submission" date="2005-03" db="EMBL/GenBank/DDBJ databases">
        <title>Comparison of the complete genome sequences of Rhodococcus erythropolis PR4 and Rhodococcus opacus B4.</title>
        <authorList>
            <person name="Takarada H."/>
            <person name="Sekine M."/>
            <person name="Hosoyama A."/>
            <person name="Yamada R."/>
            <person name="Fujisawa T."/>
            <person name="Omata S."/>
            <person name="Shimizu A."/>
            <person name="Tsukatani N."/>
            <person name="Tanikawa S."/>
            <person name="Fujita N."/>
            <person name="Harayama S."/>
        </authorList>
    </citation>
    <scope>NUCLEOTIDE SEQUENCE [LARGE SCALE GENOMIC DNA]</scope>
    <source>
        <strain>PR4 / NBRC 100887</strain>
    </source>
</reference>
<name>SYT_RHOE4</name>
<feature type="chain" id="PRO_1000203916" description="Threonine--tRNA ligase">
    <location>
        <begin position="1"/>
        <end position="685"/>
    </location>
</feature>
<feature type="domain" description="TGS" evidence="2">
    <location>
        <begin position="1"/>
        <end position="65"/>
    </location>
</feature>
<feature type="region of interest" description="Disordered" evidence="3">
    <location>
        <begin position="1"/>
        <end position="28"/>
    </location>
</feature>
<feature type="region of interest" description="Catalytic" evidence="1">
    <location>
        <begin position="262"/>
        <end position="568"/>
    </location>
</feature>
<feature type="binding site" evidence="1">
    <location>
        <position position="367"/>
    </location>
    <ligand>
        <name>Zn(2+)</name>
        <dbReference type="ChEBI" id="CHEBI:29105"/>
    </ligand>
</feature>
<feature type="binding site" evidence="1">
    <location>
        <position position="418"/>
    </location>
    <ligand>
        <name>Zn(2+)</name>
        <dbReference type="ChEBI" id="CHEBI:29105"/>
    </ligand>
</feature>
<feature type="binding site" evidence="1">
    <location>
        <position position="545"/>
    </location>
    <ligand>
        <name>Zn(2+)</name>
        <dbReference type="ChEBI" id="CHEBI:29105"/>
    </ligand>
</feature>
<comment type="function">
    <text evidence="1">Catalyzes the attachment of threonine to tRNA(Thr) in a two-step reaction: L-threonine is first activated by ATP to form Thr-AMP and then transferred to the acceptor end of tRNA(Thr). Also edits incorrectly charged L-seryl-tRNA(Thr).</text>
</comment>
<comment type="catalytic activity">
    <reaction evidence="1">
        <text>tRNA(Thr) + L-threonine + ATP = L-threonyl-tRNA(Thr) + AMP + diphosphate + H(+)</text>
        <dbReference type="Rhea" id="RHEA:24624"/>
        <dbReference type="Rhea" id="RHEA-COMP:9670"/>
        <dbReference type="Rhea" id="RHEA-COMP:9704"/>
        <dbReference type="ChEBI" id="CHEBI:15378"/>
        <dbReference type="ChEBI" id="CHEBI:30616"/>
        <dbReference type="ChEBI" id="CHEBI:33019"/>
        <dbReference type="ChEBI" id="CHEBI:57926"/>
        <dbReference type="ChEBI" id="CHEBI:78442"/>
        <dbReference type="ChEBI" id="CHEBI:78534"/>
        <dbReference type="ChEBI" id="CHEBI:456215"/>
        <dbReference type="EC" id="6.1.1.3"/>
    </reaction>
</comment>
<comment type="cofactor">
    <cofactor evidence="1">
        <name>Zn(2+)</name>
        <dbReference type="ChEBI" id="CHEBI:29105"/>
    </cofactor>
    <text evidence="1">Binds 1 zinc ion per subunit.</text>
</comment>
<comment type="subunit">
    <text evidence="1">Homodimer.</text>
</comment>
<comment type="subcellular location">
    <subcellularLocation>
        <location evidence="1">Cytoplasm</location>
    </subcellularLocation>
</comment>
<comment type="similarity">
    <text evidence="1">Belongs to the class-II aminoacyl-tRNA synthetase family.</text>
</comment>
<gene>
    <name evidence="1" type="primary">thrS</name>
    <name type="ordered locus">RER_29030</name>
</gene>
<protein>
    <recommendedName>
        <fullName evidence="1">Threonine--tRNA ligase</fullName>
        <ecNumber evidence="1">6.1.1.3</ecNumber>
    </recommendedName>
    <alternativeName>
        <fullName evidence="1">Threonyl-tRNA synthetase</fullName>
        <shortName evidence="1">ThrRS</shortName>
    </alternativeName>
</protein>